<organism>
    <name type="scientific">Arabidopsis thaliana</name>
    <name type="common">Mouse-ear cress</name>
    <dbReference type="NCBI Taxonomy" id="3702"/>
    <lineage>
        <taxon>Eukaryota</taxon>
        <taxon>Viridiplantae</taxon>
        <taxon>Streptophyta</taxon>
        <taxon>Embryophyta</taxon>
        <taxon>Tracheophyta</taxon>
        <taxon>Spermatophyta</taxon>
        <taxon>Magnoliopsida</taxon>
        <taxon>eudicotyledons</taxon>
        <taxon>Gunneridae</taxon>
        <taxon>Pentapetalae</taxon>
        <taxon>rosids</taxon>
        <taxon>malvids</taxon>
        <taxon>Brassicales</taxon>
        <taxon>Brassicaceae</taxon>
        <taxon>Camelineae</taxon>
        <taxon>Arabidopsis</taxon>
    </lineage>
</organism>
<keyword id="KW-0131">Cell cycle</keyword>
<keyword id="KW-0649">Protein kinase inhibitor</keyword>
<keyword id="KW-1185">Reference proteome</keyword>
<name>SMR10_ARATH</name>
<feature type="chain" id="PRO_0000438469" description="Cyclin-dependent protein kinase inhibitor SMR10">
    <location>
        <begin position="1"/>
        <end position="156"/>
    </location>
</feature>
<feature type="region of interest" description="Disordered" evidence="2">
    <location>
        <begin position="52"/>
        <end position="90"/>
    </location>
</feature>
<feature type="compositionally biased region" description="Basic and acidic residues" evidence="2">
    <location>
        <begin position="67"/>
        <end position="77"/>
    </location>
</feature>
<accession>Q9ZV27</accession>
<gene>
    <name evidence="3 4" type="primary">SMR10</name>
    <name evidence="5" type="ordered locus">At2g28870</name>
    <name evidence="6" type="ORF">F8N16.16</name>
</gene>
<evidence type="ECO:0000250" key="1">
    <source>
        <dbReference type="UniProtKB" id="Q9LZ78"/>
    </source>
</evidence>
<evidence type="ECO:0000256" key="2">
    <source>
        <dbReference type="SAM" id="MobiDB-lite"/>
    </source>
</evidence>
<evidence type="ECO:0000303" key="3">
    <source>
    </source>
</evidence>
<evidence type="ECO:0000303" key="4">
    <source>
    </source>
</evidence>
<evidence type="ECO:0000312" key="5">
    <source>
        <dbReference type="Araport" id="AT2G28870"/>
    </source>
</evidence>
<evidence type="ECO:0000312" key="6">
    <source>
        <dbReference type="EMBL" id="AAC79591.1"/>
    </source>
</evidence>
<sequence>MGFSDAGIYLSDPNNLCQTELGFFHEPSLGFSDQSDPQNEFHITPPIYQELQDQDLEPKSQETNNCSRKEGATVKKEEEEEDDYCKTPTRSDQILSAMPRICPPAPRKPKRVPSRSLKVRNSYRSKRMIILNVSREIDCLFNPTSLCNKIKKARYI</sequence>
<reference key="1">
    <citation type="journal article" date="1999" name="Nature">
        <title>Sequence and analysis of chromosome 2 of the plant Arabidopsis thaliana.</title>
        <authorList>
            <person name="Lin X."/>
            <person name="Kaul S."/>
            <person name="Rounsley S.D."/>
            <person name="Shea T.P."/>
            <person name="Benito M.-I."/>
            <person name="Town C.D."/>
            <person name="Fujii C.Y."/>
            <person name="Mason T.M."/>
            <person name="Bowman C.L."/>
            <person name="Barnstead M.E."/>
            <person name="Feldblyum T.V."/>
            <person name="Buell C.R."/>
            <person name="Ketchum K.A."/>
            <person name="Lee J.J."/>
            <person name="Ronning C.M."/>
            <person name="Koo H.L."/>
            <person name="Moffat K.S."/>
            <person name="Cronin L.A."/>
            <person name="Shen M."/>
            <person name="Pai G."/>
            <person name="Van Aken S."/>
            <person name="Umayam L."/>
            <person name="Tallon L.J."/>
            <person name="Gill J.E."/>
            <person name="Adams M.D."/>
            <person name="Carrera A.J."/>
            <person name="Creasy T.H."/>
            <person name="Goodman H.M."/>
            <person name="Somerville C.R."/>
            <person name="Copenhaver G.P."/>
            <person name="Preuss D."/>
            <person name="Nierman W.C."/>
            <person name="White O."/>
            <person name="Eisen J.A."/>
            <person name="Salzberg S.L."/>
            <person name="Fraser C.M."/>
            <person name="Venter J.C."/>
        </authorList>
    </citation>
    <scope>NUCLEOTIDE SEQUENCE [LARGE SCALE GENOMIC DNA]</scope>
    <source>
        <strain>cv. Columbia</strain>
    </source>
</reference>
<reference key="2">
    <citation type="journal article" date="2017" name="Plant J.">
        <title>Araport11: a complete reannotation of the Arabidopsis thaliana reference genome.</title>
        <authorList>
            <person name="Cheng C.Y."/>
            <person name="Krishnakumar V."/>
            <person name="Chan A.P."/>
            <person name="Thibaud-Nissen F."/>
            <person name="Schobel S."/>
            <person name="Town C.D."/>
        </authorList>
    </citation>
    <scope>GENOME REANNOTATION</scope>
    <source>
        <strain>cv. Columbia</strain>
    </source>
</reference>
<reference key="3">
    <citation type="submission" date="2006-05" db="EMBL/GenBank/DDBJ databases">
        <title>Arabidopsis ORF clones.</title>
        <authorList>
            <person name="Quinitio C."/>
            <person name="Chen H."/>
            <person name="Kim C.J."/>
            <person name="Shinn P."/>
            <person name="Ecker J.R."/>
        </authorList>
    </citation>
    <scope>NUCLEOTIDE SEQUENCE [LARGE SCALE MRNA]</scope>
    <source>
        <strain>cv. Columbia</strain>
    </source>
</reference>
<reference key="4">
    <citation type="submission" date="2002-03" db="EMBL/GenBank/DDBJ databases">
        <title>Full-length cDNA from Arabidopsis thaliana.</title>
        <authorList>
            <person name="Brover V.V."/>
            <person name="Troukhan M.E."/>
            <person name="Alexandrov N.A."/>
            <person name="Lu Y.-P."/>
            <person name="Flavell R.B."/>
            <person name="Feldmann K.A."/>
        </authorList>
    </citation>
    <scope>NUCLEOTIDE SEQUENCE [LARGE SCALE MRNA]</scope>
</reference>
<reference key="5">
    <citation type="journal article" date="2014" name="Plant Cell">
        <title>The Arabidopsis SIAMESE-RELATED cyclin-dependent kinase inhibitors SMR5 and SMR7 regulate the DNA damage checkpoint in response to reactive oxygen species.</title>
        <authorList>
            <person name="Yi D."/>
            <person name="Alvim Kamei C.L."/>
            <person name="Cools T."/>
            <person name="Vanderauwera S."/>
            <person name="Takahashi N."/>
            <person name="Okushima Y."/>
            <person name="Eekhout T."/>
            <person name="Yoshiyama K.O."/>
            <person name="Larkin J."/>
            <person name="Van den Daele H."/>
            <person name="Conklin P."/>
            <person name="Britt A."/>
            <person name="Umeda M."/>
            <person name="De Veylder L."/>
        </authorList>
    </citation>
    <scope>GENE FAMILY</scope>
    <scope>NOMENCLATURE</scope>
</reference>
<reference key="6">
    <citation type="journal article" date="2015" name="Plant Cell">
        <title>Functional conservation in the SIAMESE-RELATED family of cyclin-dependent kinase inhibitors in land plants.</title>
        <authorList>
            <person name="Kumar N."/>
            <person name="Harashima H."/>
            <person name="Kalve S."/>
            <person name="Bramsiepe J."/>
            <person name="Wang K."/>
            <person name="Sizani B.L."/>
            <person name="Bertrand L.L."/>
            <person name="Johnson M.C."/>
            <person name="Faulk C."/>
            <person name="Dale R."/>
            <person name="Simmons L.A."/>
            <person name="Churchman M.L."/>
            <person name="Sugimoto K."/>
            <person name="Kato N."/>
            <person name="Dasanayake M."/>
            <person name="Beemster G."/>
            <person name="Schnittger A."/>
            <person name="Larkin J.C."/>
        </authorList>
    </citation>
    <scope>GENE FAMILY</scope>
    <scope>NOMENCLATURE</scope>
</reference>
<comment type="function">
    <text evidence="1">Probable cyclin-dependent protein kinase (CDK) inhibitor that functions as a repressor of mitosis in the endoreduplication cell cycle.</text>
</comment>
<dbReference type="EMBL" id="AC005727">
    <property type="protein sequence ID" value="AAC79591.1"/>
    <property type="molecule type" value="Genomic_DNA"/>
</dbReference>
<dbReference type="EMBL" id="CP002685">
    <property type="protein sequence ID" value="AEC08183.1"/>
    <property type="molecule type" value="Genomic_DNA"/>
</dbReference>
<dbReference type="EMBL" id="AY086200">
    <property type="protein sequence ID" value="AAM64279.1"/>
    <property type="molecule type" value="mRNA"/>
</dbReference>
<dbReference type="EMBL" id="BT025615">
    <property type="protein sequence ID" value="ABF59033.1"/>
    <property type="molecule type" value="mRNA"/>
</dbReference>
<dbReference type="PIR" id="H84689">
    <property type="entry name" value="H84689"/>
</dbReference>
<dbReference type="RefSeq" id="NP_565677.1">
    <property type="nucleotide sequence ID" value="NM_128446.2"/>
</dbReference>
<dbReference type="FunCoup" id="Q9ZV27">
    <property type="interactions" value="1"/>
</dbReference>
<dbReference type="STRING" id="3702.Q9ZV27"/>
<dbReference type="PaxDb" id="3702-AT2G28870.1"/>
<dbReference type="EnsemblPlants" id="AT2G28870.1">
    <property type="protein sequence ID" value="AT2G28870.1"/>
    <property type="gene ID" value="AT2G28870"/>
</dbReference>
<dbReference type="GeneID" id="817436"/>
<dbReference type="Gramene" id="AT2G28870.1">
    <property type="protein sequence ID" value="AT2G28870.1"/>
    <property type="gene ID" value="AT2G28870"/>
</dbReference>
<dbReference type="KEGG" id="ath:AT2G28870"/>
<dbReference type="Araport" id="AT2G28870"/>
<dbReference type="TAIR" id="AT2G28870">
    <property type="gene designation" value="SMR10"/>
</dbReference>
<dbReference type="eggNOG" id="ENOG502R1PB">
    <property type="taxonomic scope" value="Eukaryota"/>
</dbReference>
<dbReference type="HOGENOM" id="CLU_1837884_0_0_1"/>
<dbReference type="InParanoid" id="Q9ZV27"/>
<dbReference type="OMA" id="REIDCLF"/>
<dbReference type="OrthoDB" id="1933617at2759"/>
<dbReference type="PhylomeDB" id="Q9ZV27"/>
<dbReference type="PRO" id="PR:Q9ZV27"/>
<dbReference type="Proteomes" id="UP000006548">
    <property type="component" value="Chromosome 2"/>
</dbReference>
<dbReference type="ExpressionAtlas" id="Q9ZV27">
    <property type="expression patterns" value="baseline and differential"/>
</dbReference>
<dbReference type="GO" id="GO:0004860">
    <property type="term" value="F:protein kinase inhibitor activity"/>
    <property type="evidence" value="ECO:0007669"/>
    <property type="project" value="UniProtKB-KW"/>
</dbReference>
<dbReference type="InterPro" id="IPR053115">
    <property type="entry name" value="CDK_inhibitor"/>
</dbReference>
<dbReference type="PANTHER" id="PTHR35162">
    <property type="entry name" value="OS08G0516600 PROTEIN"/>
    <property type="match status" value="1"/>
</dbReference>
<dbReference type="PANTHER" id="PTHR35162:SF2">
    <property type="entry name" value="OS08G0516600 PROTEIN"/>
    <property type="match status" value="1"/>
</dbReference>
<proteinExistence type="evidence at transcript level"/>
<protein>
    <recommendedName>
        <fullName evidence="3 4">Cyclin-dependent protein kinase inhibitor SMR10</fullName>
    </recommendedName>
    <alternativeName>
        <fullName evidence="3 4">Protein SIAMESE-RELATED 10</fullName>
    </alternativeName>
</protein>